<name>RS6E_STAMF</name>
<sequence length="216" mass="24100">MADFKIVISDPQAPKEETVVKVKVVGDPEIKFDENVKEGFELPILKMNSKTAEKIKAVHGVATIRMYKPGTKDKVKITGKIIVDDNIPENEVRVNAEQLVNATGTNELEGELFRARAWQIRINDDRTKLLIGLKIGDEFDGSIVGLKNVKLKIRGGSDNSGFPMRPDVMGGVKKRVLLSGPPGFHPREKGERRRKMIRGNTITEDIVQINTVIKYV</sequence>
<gene>
    <name evidence="1" type="primary">rps6e</name>
    <name type="ordered locus">Smar_0830</name>
</gene>
<feature type="chain" id="PRO_1000050643" description="Small ribosomal subunit protein eS6">
    <location>
        <begin position="1"/>
        <end position="216"/>
    </location>
</feature>
<accession>A3DMS1</accession>
<reference key="1">
    <citation type="journal article" date="2009" name="BMC Genomics">
        <title>The complete genome sequence of Staphylothermus marinus reveals differences in sulfur metabolism among heterotrophic Crenarchaeota.</title>
        <authorList>
            <person name="Anderson I.J."/>
            <person name="Dharmarajan L."/>
            <person name="Rodriguez J."/>
            <person name="Hooper S."/>
            <person name="Porat I."/>
            <person name="Ulrich L.E."/>
            <person name="Elkins J.G."/>
            <person name="Mavromatis K."/>
            <person name="Sun H."/>
            <person name="Land M."/>
            <person name="Lapidus A."/>
            <person name="Lucas S."/>
            <person name="Barry K."/>
            <person name="Huber H."/>
            <person name="Zhulin I.B."/>
            <person name="Whitman W.B."/>
            <person name="Mukhopadhyay B."/>
            <person name="Woese C."/>
            <person name="Bristow J."/>
            <person name="Kyrpides N."/>
        </authorList>
    </citation>
    <scope>NUCLEOTIDE SEQUENCE [LARGE SCALE GENOMIC DNA]</scope>
    <source>
        <strain>ATCC 43588 / DSM 3639 / JCM 9404 / F1</strain>
    </source>
</reference>
<reference key="2">
    <citation type="journal article" date="2009" name="Stand. Genomic Sci.">
        <title>Complete genome sequence of Staphylothermus marinus Stetter and Fiala 1986 type strain F1.</title>
        <authorList>
            <person name="Anderson I.J."/>
            <person name="Sun H."/>
            <person name="Lapidus A."/>
            <person name="Copeland A."/>
            <person name="Glavina Del Rio T."/>
            <person name="Tice H."/>
            <person name="Dalin E."/>
            <person name="Lucas S."/>
            <person name="Barry K."/>
            <person name="Land M."/>
            <person name="Richardson P."/>
            <person name="Huber H."/>
            <person name="Kyrpides N.C."/>
        </authorList>
    </citation>
    <scope>NUCLEOTIDE SEQUENCE [LARGE SCALE GENOMIC DNA]</scope>
    <source>
        <strain>ATCC 43588 / DSM 3639 / JCM 9404 / F1</strain>
    </source>
</reference>
<evidence type="ECO:0000255" key="1">
    <source>
        <dbReference type="HAMAP-Rule" id="MF_00512"/>
    </source>
</evidence>
<evidence type="ECO:0000305" key="2"/>
<dbReference type="EMBL" id="CP000575">
    <property type="protein sequence ID" value="ABN69931.1"/>
    <property type="molecule type" value="Genomic_DNA"/>
</dbReference>
<dbReference type="RefSeq" id="WP_011839122.1">
    <property type="nucleotide sequence ID" value="NC_009033.1"/>
</dbReference>
<dbReference type="SMR" id="A3DMS1"/>
<dbReference type="STRING" id="399550.Smar_0830"/>
<dbReference type="GeneID" id="4907496"/>
<dbReference type="KEGG" id="smr:Smar_0830"/>
<dbReference type="eggNOG" id="arCOG01946">
    <property type="taxonomic scope" value="Archaea"/>
</dbReference>
<dbReference type="HOGENOM" id="CLU_1275302_0_0_2"/>
<dbReference type="OrthoDB" id="7793at2157"/>
<dbReference type="Proteomes" id="UP000000254">
    <property type="component" value="Chromosome"/>
</dbReference>
<dbReference type="GO" id="GO:1990904">
    <property type="term" value="C:ribonucleoprotein complex"/>
    <property type="evidence" value="ECO:0007669"/>
    <property type="project" value="UniProtKB-KW"/>
</dbReference>
<dbReference type="GO" id="GO:0005840">
    <property type="term" value="C:ribosome"/>
    <property type="evidence" value="ECO:0007669"/>
    <property type="project" value="UniProtKB-KW"/>
</dbReference>
<dbReference type="GO" id="GO:0003735">
    <property type="term" value="F:structural constituent of ribosome"/>
    <property type="evidence" value="ECO:0007669"/>
    <property type="project" value="InterPro"/>
</dbReference>
<dbReference type="GO" id="GO:0006412">
    <property type="term" value="P:translation"/>
    <property type="evidence" value="ECO:0007669"/>
    <property type="project" value="UniProtKB-UniRule"/>
</dbReference>
<dbReference type="HAMAP" id="MF_00512">
    <property type="entry name" value="Ribosomal_eS6"/>
    <property type="match status" value="1"/>
</dbReference>
<dbReference type="InterPro" id="IPR001377">
    <property type="entry name" value="Ribosomal_eS6"/>
</dbReference>
<dbReference type="InterPro" id="IPR020924">
    <property type="entry name" value="Ribosomal_eS6_arc"/>
</dbReference>
<dbReference type="InterPro" id="IPR018282">
    <property type="entry name" value="Ribosomal_eS6_CS"/>
</dbReference>
<dbReference type="NCBIfam" id="NF003292">
    <property type="entry name" value="PRK04290.1-1"/>
    <property type="match status" value="1"/>
</dbReference>
<dbReference type="PANTHER" id="PTHR11502">
    <property type="entry name" value="40S RIBOSOMAL PROTEIN S6"/>
    <property type="match status" value="1"/>
</dbReference>
<dbReference type="Pfam" id="PF01092">
    <property type="entry name" value="Ribosomal_S6e"/>
    <property type="match status" value="1"/>
</dbReference>
<dbReference type="SMART" id="SM01405">
    <property type="entry name" value="Ribosomal_S6e"/>
    <property type="match status" value="1"/>
</dbReference>
<dbReference type="PROSITE" id="PS00578">
    <property type="entry name" value="RIBOSOMAL_S6E"/>
    <property type="match status" value="1"/>
</dbReference>
<protein>
    <recommendedName>
        <fullName evidence="1">Small ribosomal subunit protein eS6</fullName>
    </recommendedName>
    <alternativeName>
        <fullName evidence="2">30S ribosomal protein S6e</fullName>
    </alternativeName>
</protein>
<organism>
    <name type="scientific">Staphylothermus marinus (strain ATCC 43588 / DSM 3639 / JCM 9404 / F1)</name>
    <dbReference type="NCBI Taxonomy" id="399550"/>
    <lineage>
        <taxon>Archaea</taxon>
        <taxon>Thermoproteota</taxon>
        <taxon>Thermoprotei</taxon>
        <taxon>Desulfurococcales</taxon>
        <taxon>Desulfurococcaceae</taxon>
        <taxon>Staphylothermus</taxon>
    </lineage>
</organism>
<proteinExistence type="inferred from homology"/>
<comment type="similarity">
    <text evidence="1">Belongs to the eukaryotic ribosomal protein eS6 family.</text>
</comment>
<keyword id="KW-1185">Reference proteome</keyword>
<keyword id="KW-0687">Ribonucleoprotein</keyword>
<keyword id="KW-0689">Ribosomal protein</keyword>